<feature type="signal peptide" evidence="2">
    <location>
        <begin position="1"/>
        <end position="21"/>
    </location>
</feature>
<feature type="propeptide" id="PRO_0000433691" evidence="1">
    <location>
        <begin position="22"/>
        <end position="42"/>
    </location>
</feature>
<feature type="peptide" id="PRO_5000461221" description="Delta-actitoxin-Avd2b 1">
    <location>
        <begin position="45"/>
        <end position="72"/>
    </location>
</feature>
<feature type="disulfide bond" evidence="1">
    <location>
        <begin position="47"/>
        <end position="62"/>
    </location>
</feature>
<feature type="disulfide bond" evidence="1">
    <location>
        <begin position="48"/>
        <end position="56"/>
    </location>
</feature>
<feature type="disulfide bond" evidence="1">
    <location>
        <begin position="50"/>
        <end position="67"/>
    </location>
</feature>
<sequence>MMNRLLVFLMLGAAFMLVVSANDAYGDEPAFKDLNQGDESLGKRKSCCPCWLRGNCFWGQNCYPEGCSGPKV</sequence>
<comment type="function">
    <text evidence="3">Voltage-gated sodium channel (Nav) inhibitor. 1 uM completely inhibits insect voltage-gated sodium channel inactivation (DmNav1 from D.melanogaster).</text>
</comment>
<comment type="subcellular location">
    <subcellularLocation>
        <location evidence="6">Secreted</location>
    </subcellularLocation>
    <subcellularLocation>
        <location evidence="6">Nematocyst</location>
    </subcellularLocation>
</comment>
<comment type="similarity">
    <text evidence="6">Belongs to the sea anemone short toxin (type III) family.</text>
</comment>
<comment type="caution">
    <text evidence="6">Opinions are divided on whether Anemonia viridis (Forsskal, 1775) and Anemonia sulcata (Pennant, 1777) are separate species.</text>
</comment>
<keyword id="KW-1015">Disulfide bond</keyword>
<keyword id="KW-0872">Ion channel impairing toxin</keyword>
<keyword id="KW-0166">Nematocyst</keyword>
<keyword id="KW-0528">Neurotoxin</keyword>
<keyword id="KW-0964">Secreted</keyword>
<keyword id="KW-0732">Signal</keyword>
<keyword id="KW-0800">Toxin</keyword>
<keyword id="KW-0738">Voltage-gated sodium channel impairing toxin</keyword>
<organism>
    <name type="scientific">Anemonia viridis</name>
    <name type="common">Snakelocks anemone</name>
    <dbReference type="NCBI Taxonomy" id="51769"/>
    <lineage>
        <taxon>Eukaryota</taxon>
        <taxon>Metazoa</taxon>
        <taxon>Cnidaria</taxon>
        <taxon>Anthozoa</taxon>
        <taxon>Hexacorallia</taxon>
        <taxon>Actiniaria</taxon>
        <taxon>Actiniidae</taxon>
        <taxon>Anemonia</taxon>
    </lineage>
</organism>
<reference key="1">
    <citation type="journal article" date="2009" name="J. Mol. Evol.">
        <title>Fusion and retrotransposition events in the evolution of the sea anemone Anemonia viridis neurotoxin genes.</title>
        <authorList>
            <person name="Moran Y."/>
            <person name="Weinberger H."/>
            <person name="Lazarus N."/>
            <person name="Gur M."/>
            <person name="Kahn R."/>
            <person name="Gordon D."/>
            <person name="Gurevitz M."/>
        </authorList>
    </citation>
    <scope>NUCLEOTIDE SEQUENCE [MRNA]</scope>
    <scope>FUNCTION</scope>
    <source>
        <tissue>Ovary</tissue>
    </source>
</reference>
<reference key="2">
    <citation type="journal article" date="2012" name="Toxicon">
        <title>Development of a rational nomenclature for naming peptide and protein toxins from sea anemones.</title>
        <authorList>
            <person name="Oliveira J.S."/>
            <person name="Fuentes-Silva D."/>
            <person name="King G.F."/>
        </authorList>
    </citation>
    <scope>NOMENCLATURE</scope>
</reference>
<evidence type="ECO:0000250" key="1">
    <source>
        <dbReference type="UniProtKB" id="P01535"/>
    </source>
</evidence>
<evidence type="ECO:0000255" key="2"/>
<evidence type="ECO:0000269" key="3">
    <source>
    </source>
</evidence>
<evidence type="ECO:0000303" key="4">
    <source>
    </source>
</evidence>
<evidence type="ECO:0000303" key="5">
    <source>
    </source>
</evidence>
<evidence type="ECO:0000305" key="6"/>
<evidence type="ECO:0000312" key="7">
    <source>
        <dbReference type="EMBL" id="ACL12306.1"/>
    </source>
</evidence>
<evidence type="ECO:0000312" key="8">
    <source>
        <dbReference type="EMBL" id="ACL12307.1"/>
    </source>
</evidence>
<protein>
    <recommendedName>
        <fullName evidence="5">Delta-actitoxin-Avd2b 1</fullName>
        <shortName evidence="5">Delta-AITX-Avd2b 1</shortName>
    </recommendedName>
    <alternativeName>
        <fullName evidence="4">Av7</fullName>
    </alternativeName>
    <alternativeName>
        <fullName evidence="7 8">Neurotoxin 7</fullName>
    </alternativeName>
</protein>
<accession>C3TS08</accession>
<proteinExistence type="inferred from homology"/>
<dbReference type="EMBL" id="EU919731">
    <property type="protein sequence ID" value="ACL12306.1"/>
    <property type="molecule type" value="mRNA"/>
</dbReference>
<dbReference type="EMBL" id="EU919732">
    <property type="protein sequence ID" value="ACL12307.1"/>
    <property type="molecule type" value="mRNA"/>
</dbReference>
<dbReference type="GO" id="GO:0005576">
    <property type="term" value="C:extracellular region"/>
    <property type="evidence" value="ECO:0007669"/>
    <property type="project" value="UniProtKB-SubCell"/>
</dbReference>
<dbReference type="GO" id="GO:0042151">
    <property type="term" value="C:nematocyst"/>
    <property type="evidence" value="ECO:0007669"/>
    <property type="project" value="UniProtKB-SubCell"/>
</dbReference>
<dbReference type="GO" id="GO:0019871">
    <property type="term" value="F:sodium channel inhibitor activity"/>
    <property type="evidence" value="ECO:0007669"/>
    <property type="project" value="InterPro"/>
</dbReference>
<dbReference type="GO" id="GO:0090729">
    <property type="term" value="F:toxin activity"/>
    <property type="evidence" value="ECO:0007669"/>
    <property type="project" value="UniProtKB-KW"/>
</dbReference>
<dbReference type="InterPro" id="IPR012509">
    <property type="entry name" value="Neurotoxin_3_Anemonia"/>
</dbReference>
<dbReference type="InterPro" id="IPR036247">
    <property type="entry name" value="Neurotoxin_3_sf"/>
</dbReference>
<dbReference type="Pfam" id="PF08098">
    <property type="entry name" value="ATX_III"/>
    <property type="match status" value="1"/>
</dbReference>
<dbReference type="SUPFAM" id="SSF57419">
    <property type="entry name" value="Neurotoxin III (ATX III)"/>
    <property type="match status" value="1"/>
</dbReference>
<name>STX71_ANEVI</name>